<evidence type="ECO:0000250" key="1">
    <source>
        <dbReference type="UniProtKB" id="P02086"/>
    </source>
</evidence>
<evidence type="ECO:0000250" key="2">
    <source>
        <dbReference type="UniProtKB" id="P68871"/>
    </source>
</evidence>
<evidence type="ECO:0000255" key="3">
    <source>
        <dbReference type="PROSITE-ProRule" id="PRU00238"/>
    </source>
</evidence>
<organism>
    <name type="scientific">Tupaia glis</name>
    <name type="common">Common tree shrew</name>
    <name type="synonym">Sorex glis</name>
    <dbReference type="NCBI Taxonomy" id="9395"/>
    <lineage>
        <taxon>Eukaryota</taxon>
        <taxon>Metazoa</taxon>
        <taxon>Chordata</taxon>
        <taxon>Craniata</taxon>
        <taxon>Vertebrata</taxon>
        <taxon>Euteleostomi</taxon>
        <taxon>Mammalia</taxon>
        <taxon>Eutheria</taxon>
        <taxon>Euarchontoglires</taxon>
        <taxon>Scandentia</taxon>
        <taxon>Tupaiidae</taxon>
        <taxon>Tupaia</taxon>
    </lineage>
</organism>
<name>HBB_TUPGL</name>
<gene>
    <name type="primary">HBB</name>
</gene>
<reference key="1">
    <citation type="journal article" date="1977" name="J. Biochem.">
        <title>Amino acid sequences of the aplpha and beta chains of adult hemoglobin of the tupai, Tupaia glis.</title>
        <authorList>
            <person name="Maita T."/>
            <person name="Tanaka E."/>
            <person name="Goodman M."/>
            <person name="Matsuda G."/>
        </authorList>
    </citation>
    <scope>PROTEIN SEQUENCE</scope>
</reference>
<proteinExistence type="evidence at protein level"/>
<dbReference type="PIR" id="A02369">
    <property type="entry name" value="HBTS"/>
</dbReference>
<dbReference type="SMR" id="P02052"/>
<dbReference type="GO" id="GO:0072562">
    <property type="term" value="C:blood microparticle"/>
    <property type="evidence" value="ECO:0007669"/>
    <property type="project" value="TreeGrafter"/>
</dbReference>
<dbReference type="GO" id="GO:0031838">
    <property type="term" value="C:haptoglobin-hemoglobin complex"/>
    <property type="evidence" value="ECO:0007669"/>
    <property type="project" value="TreeGrafter"/>
</dbReference>
<dbReference type="GO" id="GO:0005833">
    <property type="term" value="C:hemoglobin complex"/>
    <property type="evidence" value="ECO:0007669"/>
    <property type="project" value="InterPro"/>
</dbReference>
<dbReference type="GO" id="GO:0031720">
    <property type="term" value="F:haptoglobin binding"/>
    <property type="evidence" value="ECO:0007669"/>
    <property type="project" value="TreeGrafter"/>
</dbReference>
<dbReference type="GO" id="GO:0020037">
    <property type="term" value="F:heme binding"/>
    <property type="evidence" value="ECO:0007669"/>
    <property type="project" value="InterPro"/>
</dbReference>
<dbReference type="GO" id="GO:0031721">
    <property type="term" value="F:hemoglobin alpha binding"/>
    <property type="evidence" value="ECO:0007669"/>
    <property type="project" value="TreeGrafter"/>
</dbReference>
<dbReference type="GO" id="GO:0046872">
    <property type="term" value="F:metal ion binding"/>
    <property type="evidence" value="ECO:0007669"/>
    <property type="project" value="UniProtKB-KW"/>
</dbReference>
<dbReference type="GO" id="GO:0043177">
    <property type="term" value="F:organic acid binding"/>
    <property type="evidence" value="ECO:0007669"/>
    <property type="project" value="TreeGrafter"/>
</dbReference>
<dbReference type="GO" id="GO:0019825">
    <property type="term" value="F:oxygen binding"/>
    <property type="evidence" value="ECO:0007669"/>
    <property type="project" value="InterPro"/>
</dbReference>
<dbReference type="GO" id="GO:0005344">
    <property type="term" value="F:oxygen carrier activity"/>
    <property type="evidence" value="ECO:0007669"/>
    <property type="project" value="UniProtKB-KW"/>
</dbReference>
<dbReference type="GO" id="GO:0004601">
    <property type="term" value="F:peroxidase activity"/>
    <property type="evidence" value="ECO:0007669"/>
    <property type="project" value="TreeGrafter"/>
</dbReference>
<dbReference type="GO" id="GO:0042744">
    <property type="term" value="P:hydrogen peroxide catabolic process"/>
    <property type="evidence" value="ECO:0007669"/>
    <property type="project" value="TreeGrafter"/>
</dbReference>
<dbReference type="CDD" id="cd08925">
    <property type="entry name" value="Hb-beta-like"/>
    <property type="match status" value="1"/>
</dbReference>
<dbReference type="FunFam" id="1.10.490.10:FF:000001">
    <property type="entry name" value="Hemoglobin subunit beta"/>
    <property type="match status" value="1"/>
</dbReference>
<dbReference type="Gene3D" id="1.10.490.10">
    <property type="entry name" value="Globins"/>
    <property type="match status" value="1"/>
</dbReference>
<dbReference type="InterPro" id="IPR000971">
    <property type="entry name" value="Globin"/>
</dbReference>
<dbReference type="InterPro" id="IPR009050">
    <property type="entry name" value="Globin-like_sf"/>
</dbReference>
<dbReference type="InterPro" id="IPR012292">
    <property type="entry name" value="Globin/Proto"/>
</dbReference>
<dbReference type="InterPro" id="IPR002337">
    <property type="entry name" value="Hemoglobin_b"/>
</dbReference>
<dbReference type="InterPro" id="IPR050056">
    <property type="entry name" value="Hemoglobin_oxygen_transport"/>
</dbReference>
<dbReference type="PANTHER" id="PTHR11442">
    <property type="entry name" value="HEMOGLOBIN FAMILY MEMBER"/>
    <property type="match status" value="1"/>
</dbReference>
<dbReference type="PANTHER" id="PTHR11442:SF42">
    <property type="entry name" value="HEMOGLOBIN SUBUNIT BETA"/>
    <property type="match status" value="1"/>
</dbReference>
<dbReference type="Pfam" id="PF00042">
    <property type="entry name" value="Globin"/>
    <property type="match status" value="1"/>
</dbReference>
<dbReference type="PRINTS" id="PR00814">
    <property type="entry name" value="BETAHAEM"/>
</dbReference>
<dbReference type="SUPFAM" id="SSF46458">
    <property type="entry name" value="Globin-like"/>
    <property type="match status" value="1"/>
</dbReference>
<dbReference type="PROSITE" id="PS01033">
    <property type="entry name" value="GLOBIN"/>
    <property type="match status" value="1"/>
</dbReference>
<comment type="function">
    <text>Involved in oxygen transport from the lung to the various peripheral tissues.</text>
</comment>
<comment type="subunit">
    <text>Heterotetramer of two alpha chains and two beta chains.</text>
</comment>
<comment type="tissue specificity">
    <text>Red blood cells.</text>
</comment>
<comment type="similarity">
    <text evidence="3">Belongs to the globin family.</text>
</comment>
<accession>P02052</accession>
<sequence>VHLSGEEKAAVTGLWGKVDLEKVGGQSLGSLLIVYPWTQRFFDSFGDLSSPSAVMSNPKVKAHGKKVLTSFSDGLNHLDNLKGTFAKLSELHCDKLHVDPENFRLLGNVLVRVLACNFGPEFTPQVQAAFQKVVAGVANALAHKYH</sequence>
<keyword id="KW-0007">Acetylation</keyword>
<keyword id="KW-0903">Direct protein sequencing</keyword>
<keyword id="KW-0349">Heme</keyword>
<keyword id="KW-0408">Iron</keyword>
<keyword id="KW-0479">Metal-binding</keyword>
<keyword id="KW-0561">Oxygen transport</keyword>
<keyword id="KW-0597">Phosphoprotein</keyword>
<keyword id="KW-0702">S-nitrosylation</keyword>
<keyword id="KW-0813">Transport</keyword>
<feature type="chain" id="PRO_0000053142" description="Hemoglobin subunit beta">
    <location>
        <begin position="1"/>
        <end position="146"/>
    </location>
</feature>
<feature type="domain" description="Globin" evidence="3">
    <location>
        <begin position="2"/>
        <end position="146"/>
    </location>
</feature>
<feature type="binding site" description="distal binding residue">
    <location>
        <position position="63"/>
    </location>
    <ligand>
        <name>heme b</name>
        <dbReference type="ChEBI" id="CHEBI:60344"/>
    </ligand>
    <ligandPart>
        <name>Fe</name>
        <dbReference type="ChEBI" id="CHEBI:18248"/>
    </ligandPart>
</feature>
<feature type="binding site" description="proximal binding residue">
    <location>
        <position position="92"/>
    </location>
    <ligand>
        <name>heme b</name>
        <dbReference type="ChEBI" id="CHEBI:60344"/>
    </ligand>
    <ligandPart>
        <name>Fe</name>
        <dbReference type="ChEBI" id="CHEBI:18248"/>
    </ligandPart>
</feature>
<feature type="modified residue" description="N-acetylvaline" evidence="1">
    <location>
        <position position="1"/>
    </location>
</feature>
<feature type="modified residue" description="Phosphothreonine" evidence="2">
    <location>
        <position position="12"/>
    </location>
</feature>
<feature type="modified residue" description="Phosphoserine" evidence="2">
    <location>
        <position position="44"/>
    </location>
</feature>
<feature type="modified residue" description="N6-acetyllysine" evidence="2">
    <location>
        <position position="59"/>
    </location>
</feature>
<feature type="modified residue" description="N6-acetyllysine" evidence="2">
    <location>
        <position position="82"/>
    </location>
</feature>
<feature type="modified residue" description="S-nitrosocysteine" evidence="2">
    <location>
        <position position="93"/>
    </location>
</feature>
<feature type="modified residue" description="N6-acetyllysine" evidence="2">
    <location>
        <position position="144"/>
    </location>
</feature>
<protein>
    <recommendedName>
        <fullName>Hemoglobin subunit beta</fullName>
    </recommendedName>
    <alternativeName>
        <fullName>Beta-globin</fullName>
    </alternativeName>
    <alternativeName>
        <fullName>Hemoglobin beta chain</fullName>
    </alternativeName>
</protein>